<comment type="function">
    <text evidence="2">DNA-dependent RNA polymerase catalyzes the transcription of DNA into RNA using the four ribonucleoside triphosphates as substrates (By similarity). Specific peripheric component of RNA polymerase III (Pol III) which synthesizes small non-coding RNAs including 5S rRNA, snRNAs, tRNAs and miRNAs from at least 500 distinct genomic loci. Part of POLR3C/RPC3-POLR3F/RPC6-POLR3G/RPC7 heterotrimer, coordinates the dynamics of Pol III stalk and clamp modules during the transition from apo to elongation state (By similarity). Pol III plays a key role in sensing and limiting infection by intracellular bacteria and DNA viruses. Acts as a nuclear and cytosolic DNA sensor involved in innate immune response. Can sense non-self dsDNA that serves as template for transcription into dsRNA. The non-self RNA polymerase III transcripts, such as Epstein-Barr virus-encoded RNAs (EBERs) induce type I interferon and NF-kappa-B through the RIG-I pathway. Preferentially binds single-stranded DNA (ssDNA) in a sequence-independent manner (By similarity).</text>
</comment>
<comment type="subunit">
    <text evidence="1 2">Component of the RNA polymerase III complex consisting of 17 subunits: a ten-subunit horseshoe-shaped catalytic core composed of POLR3A/RPC1, POLR3B/RPC2, POLR1C/RPAC1, POLR1D/RPAC2, POLR3K/RPC10, POLR2E/RPABC1, POLR2F/RPABC2, POLR2H/RPABC3, POLR2K/RPABC4 and POLR2L/RPABC5; a mobile stalk composed of two subunits POLR3H/RPC8 and CRCP/RPC9, protruding from the core and functioning primarily in transcription initiation; and additional subunits homologous to general transcription factors of the RNA polymerase II machinery, POLR3C/RPC3-POLR3F/RPC6-POLR3G/RPC7 heterotrimer required for transcription initiation and POLR3D/RPC4-POLR3E/RPC5 heterodimer involved in both transcription initiation and termination. Directly interacts with POLR3G/RPC7 and POLR3GL. Directly interacts with POLR3F/RPC6. Interacts with GTF3C4. As part of the RNA polymerase III complex, interacts with PKP2.</text>
</comment>
<comment type="subcellular location">
    <subcellularLocation>
        <location evidence="2">Nucleus</location>
    </subcellularLocation>
</comment>
<comment type="alternative products">
    <event type="alternative splicing"/>
    <isoform>
        <id>Q9D483-1</id>
        <name>1</name>
        <sequence type="displayed"/>
    </isoform>
    <isoform>
        <id>Q9D483-2</id>
        <name>2</name>
        <sequence type="described" ref="VSP_010678 VSP_010679"/>
    </isoform>
</comment>
<comment type="similarity">
    <text evidence="5">Belongs to the eukaryotic RPC3/POLR3C RNA polymerase subunit family.</text>
</comment>
<name>RPC3_MOUSE</name>
<evidence type="ECO:0000250" key="1"/>
<evidence type="ECO:0000250" key="2">
    <source>
        <dbReference type="UniProtKB" id="Q9BUI4"/>
    </source>
</evidence>
<evidence type="ECO:0000256" key="3">
    <source>
        <dbReference type="SAM" id="MobiDB-lite"/>
    </source>
</evidence>
<evidence type="ECO:0000303" key="4">
    <source>
    </source>
</evidence>
<evidence type="ECO:0000305" key="5"/>
<evidence type="ECO:0000312" key="6">
    <source>
        <dbReference type="MGI" id="MGI:1921664"/>
    </source>
</evidence>
<reference key="1">
    <citation type="journal article" date="2005" name="Science">
        <title>The transcriptional landscape of the mammalian genome.</title>
        <authorList>
            <person name="Carninci P."/>
            <person name="Kasukawa T."/>
            <person name="Katayama S."/>
            <person name="Gough J."/>
            <person name="Frith M.C."/>
            <person name="Maeda N."/>
            <person name="Oyama R."/>
            <person name="Ravasi T."/>
            <person name="Lenhard B."/>
            <person name="Wells C."/>
            <person name="Kodzius R."/>
            <person name="Shimokawa K."/>
            <person name="Bajic V.B."/>
            <person name="Brenner S.E."/>
            <person name="Batalov S."/>
            <person name="Forrest A.R."/>
            <person name="Zavolan M."/>
            <person name="Davis M.J."/>
            <person name="Wilming L.G."/>
            <person name="Aidinis V."/>
            <person name="Allen J.E."/>
            <person name="Ambesi-Impiombato A."/>
            <person name="Apweiler R."/>
            <person name="Aturaliya R.N."/>
            <person name="Bailey T.L."/>
            <person name="Bansal M."/>
            <person name="Baxter L."/>
            <person name="Beisel K.W."/>
            <person name="Bersano T."/>
            <person name="Bono H."/>
            <person name="Chalk A.M."/>
            <person name="Chiu K.P."/>
            <person name="Choudhary V."/>
            <person name="Christoffels A."/>
            <person name="Clutterbuck D.R."/>
            <person name="Crowe M.L."/>
            <person name="Dalla E."/>
            <person name="Dalrymple B.P."/>
            <person name="de Bono B."/>
            <person name="Della Gatta G."/>
            <person name="di Bernardo D."/>
            <person name="Down T."/>
            <person name="Engstrom P."/>
            <person name="Fagiolini M."/>
            <person name="Faulkner G."/>
            <person name="Fletcher C.F."/>
            <person name="Fukushima T."/>
            <person name="Furuno M."/>
            <person name="Futaki S."/>
            <person name="Gariboldi M."/>
            <person name="Georgii-Hemming P."/>
            <person name="Gingeras T.R."/>
            <person name="Gojobori T."/>
            <person name="Green R.E."/>
            <person name="Gustincich S."/>
            <person name="Harbers M."/>
            <person name="Hayashi Y."/>
            <person name="Hensch T.K."/>
            <person name="Hirokawa N."/>
            <person name="Hill D."/>
            <person name="Huminiecki L."/>
            <person name="Iacono M."/>
            <person name="Ikeo K."/>
            <person name="Iwama A."/>
            <person name="Ishikawa T."/>
            <person name="Jakt M."/>
            <person name="Kanapin A."/>
            <person name="Katoh M."/>
            <person name="Kawasawa Y."/>
            <person name="Kelso J."/>
            <person name="Kitamura H."/>
            <person name="Kitano H."/>
            <person name="Kollias G."/>
            <person name="Krishnan S.P."/>
            <person name="Kruger A."/>
            <person name="Kummerfeld S.K."/>
            <person name="Kurochkin I.V."/>
            <person name="Lareau L.F."/>
            <person name="Lazarevic D."/>
            <person name="Lipovich L."/>
            <person name="Liu J."/>
            <person name="Liuni S."/>
            <person name="McWilliam S."/>
            <person name="Madan Babu M."/>
            <person name="Madera M."/>
            <person name="Marchionni L."/>
            <person name="Matsuda H."/>
            <person name="Matsuzawa S."/>
            <person name="Miki H."/>
            <person name="Mignone F."/>
            <person name="Miyake S."/>
            <person name="Morris K."/>
            <person name="Mottagui-Tabar S."/>
            <person name="Mulder N."/>
            <person name="Nakano N."/>
            <person name="Nakauchi H."/>
            <person name="Ng P."/>
            <person name="Nilsson R."/>
            <person name="Nishiguchi S."/>
            <person name="Nishikawa S."/>
            <person name="Nori F."/>
            <person name="Ohara O."/>
            <person name="Okazaki Y."/>
            <person name="Orlando V."/>
            <person name="Pang K.C."/>
            <person name="Pavan W.J."/>
            <person name="Pavesi G."/>
            <person name="Pesole G."/>
            <person name="Petrovsky N."/>
            <person name="Piazza S."/>
            <person name="Reed J."/>
            <person name="Reid J.F."/>
            <person name="Ring B.Z."/>
            <person name="Ringwald M."/>
            <person name="Rost B."/>
            <person name="Ruan Y."/>
            <person name="Salzberg S.L."/>
            <person name="Sandelin A."/>
            <person name="Schneider C."/>
            <person name="Schoenbach C."/>
            <person name="Sekiguchi K."/>
            <person name="Semple C.A."/>
            <person name="Seno S."/>
            <person name="Sessa L."/>
            <person name="Sheng Y."/>
            <person name="Shibata Y."/>
            <person name="Shimada H."/>
            <person name="Shimada K."/>
            <person name="Silva D."/>
            <person name="Sinclair B."/>
            <person name="Sperling S."/>
            <person name="Stupka E."/>
            <person name="Sugiura K."/>
            <person name="Sultana R."/>
            <person name="Takenaka Y."/>
            <person name="Taki K."/>
            <person name="Tammoja K."/>
            <person name="Tan S.L."/>
            <person name="Tang S."/>
            <person name="Taylor M.S."/>
            <person name="Tegner J."/>
            <person name="Teichmann S.A."/>
            <person name="Ueda H.R."/>
            <person name="van Nimwegen E."/>
            <person name="Verardo R."/>
            <person name="Wei C.L."/>
            <person name="Yagi K."/>
            <person name="Yamanishi H."/>
            <person name="Zabarovsky E."/>
            <person name="Zhu S."/>
            <person name="Zimmer A."/>
            <person name="Hide W."/>
            <person name="Bult C."/>
            <person name="Grimmond S.M."/>
            <person name="Teasdale R.D."/>
            <person name="Liu E.T."/>
            <person name="Brusic V."/>
            <person name="Quackenbush J."/>
            <person name="Wahlestedt C."/>
            <person name="Mattick J.S."/>
            <person name="Hume D.A."/>
            <person name="Kai C."/>
            <person name="Sasaki D."/>
            <person name="Tomaru Y."/>
            <person name="Fukuda S."/>
            <person name="Kanamori-Katayama M."/>
            <person name="Suzuki M."/>
            <person name="Aoki J."/>
            <person name="Arakawa T."/>
            <person name="Iida J."/>
            <person name="Imamura K."/>
            <person name="Itoh M."/>
            <person name="Kato T."/>
            <person name="Kawaji H."/>
            <person name="Kawagashira N."/>
            <person name="Kawashima T."/>
            <person name="Kojima M."/>
            <person name="Kondo S."/>
            <person name="Konno H."/>
            <person name="Nakano K."/>
            <person name="Ninomiya N."/>
            <person name="Nishio T."/>
            <person name="Okada M."/>
            <person name="Plessy C."/>
            <person name="Shibata K."/>
            <person name="Shiraki T."/>
            <person name="Suzuki S."/>
            <person name="Tagami M."/>
            <person name="Waki K."/>
            <person name="Watahiki A."/>
            <person name="Okamura-Oho Y."/>
            <person name="Suzuki H."/>
            <person name="Kawai J."/>
            <person name="Hayashizaki Y."/>
        </authorList>
    </citation>
    <scope>NUCLEOTIDE SEQUENCE [LARGE SCALE MRNA] (ISOFORM 1)</scope>
    <source>
        <strain>C57BL/6J</strain>
        <tissue>Testis</tissue>
    </source>
</reference>
<reference key="2">
    <citation type="journal article" date="2004" name="Genome Res.">
        <title>The status, quality, and expansion of the NIH full-length cDNA project: the Mammalian Gene Collection (MGC).</title>
        <authorList>
            <consortium name="The MGC Project Team"/>
        </authorList>
    </citation>
    <scope>NUCLEOTIDE SEQUENCE [LARGE SCALE MRNA] (ISOFORM 2)</scope>
    <source>
        <tissue>Salivary gland</tissue>
    </source>
</reference>
<reference key="3">
    <citation type="journal article" date="2010" name="Cell">
        <title>A tissue-specific atlas of mouse protein phosphorylation and expression.</title>
        <authorList>
            <person name="Huttlin E.L."/>
            <person name="Jedrychowski M.P."/>
            <person name="Elias J.E."/>
            <person name="Goswami T."/>
            <person name="Rad R."/>
            <person name="Beausoleil S.A."/>
            <person name="Villen J."/>
            <person name="Haas W."/>
            <person name="Sowa M.E."/>
            <person name="Gygi S.P."/>
        </authorList>
    </citation>
    <scope>IDENTIFICATION BY MASS SPECTROMETRY [LARGE SCALE ANALYSIS]</scope>
    <source>
        <tissue>Testis</tissue>
    </source>
</reference>
<keyword id="KW-0025">Alternative splicing</keyword>
<keyword id="KW-0051">Antiviral defense</keyword>
<keyword id="KW-0238">DNA-binding</keyword>
<keyword id="KW-0240">DNA-directed RNA polymerase</keyword>
<keyword id="KW-0391">Immunity</keyword>
<keyword id="KW-0399">Innate immunity</keyword>
<keyword id="KW-0548">Nucleotidyltransferase</keyword>
<keyword id="KW-0539">Nucleus</keyword>
<keyword id="KW-0597">Phosphoprotein</keyword>
<keyword id="KW-1185">Reference proteome</keyword>
<keyword id="KW-0804">Transcription</keyword>
<keyword id="KW-0808">Transferase</keyword>
<sequence length="533" mass="60706">MTQAEIKLCSLLLQEHFGEIVEKIGVHLVRTGSQPLRVIAHDTKASLDQVKKALCVLIHHNLVLYHVHKRGVVEYEAQCSRVLRMLRYPRYIYTTKTLYGDTGELIVEELLLNGKMTMSAVVKKVADRLTETMEDGKTMDYAEVSNAFVRLADTHFVQRCPLVPDTDSSDRGPPPPAPTLVINEKDMYLVPKLSLIGKGKRRRSSDEDATGEPKAKKPRYTDNKEPSPDDGIYWQVNLDRFHQHFRDQAIVSAVANRMDQTSSEIVRTMLRMSEITTPSSAPYTQPLSSNEIFRSLPVGYNISKQVLDQYLTLLADDPLEFIGKSGDSGGGMFVINLHKALASLATATLESVIQERFGSRCARIFRLVLQKKHLEQKQVEDFAMIPAKEAKDMLYKMLSENFILLQEIPKTPDHAPSRTFYLYTVNVLSAARMLLHRCYKSIANLIERRQFETKENKRLLEKSQRVEAIMASMQATGAEEVQLQEIEEMITAPERQQLETLKRNVNKLDASEIQVDETIFLLESYIESTMKRQ</sequence>
<dbReference type="EMBL" id="AK016716">
    <property type="protein sequence ID" value="BAB30395.1"/>
    <property type="molecule type" value="mRNA"/>
</dbReference>
<dbReference type="EMBL" id="BC026793">
    <property type="protein sequence ID" value="AAH26793.1"/>
    <property type="molecule type" value="mRNA"/>
</dbReference>
<dbReference type="CCDS" id="CCDS51010.1">
    <molecule id="Q9D483-1"/>
</dbReference>
<dbReference type="RefSeq" id="NP_083201.1">
    <molecule id="Q9D483-1"/>
    <property type="nucleotide sequence ID" value="NM_028925.2"/>
</dbReference>
<dbReference type="RefSeq" id="XP_006502250.1">
    <molecule id="Q9D483-1"/>
    <property type="nucleotide sequence ID" value="XM_006502187.5"/>
</dbReference>
<dbReference type="SMR" id="Q9D483"/>
<dbReference type="BioGRID" id="216732">
    <property type="interactions" value="2"/>
</dbReference>
<dbReference type="FunCoup" id="Q9D483">
    <property type="interactions" value="3438"/>
</dbReference>
<dbReference type="STRING" id="10090.ENSMUSP00000122435"/>
<dbReference type="iPTMnet" id="Q9D483"/>
<dbReference type="PhosphoSitePlus" id="Q9D483"/>
<dbReference type="PaxDb" id="10090-ENSMUSP00000029741"/>
<dbReference type="PeptideAtlas" id="Q9D483"/>
<dbReference type="ProteomicsDB" id="299940">
    <molecule id="Q9D483-1"/>
</dbReference>
<dbReference type="ProteomicsDB" id="299941">
    <molecule id="Q9D483-2"/>
</dbReference>
<dbReference type="Pumba" id="Q9D483"/>
<dbReference type="Antibodypedia" id="33966">
    <property type="antibodies" value="251 antibodies from 24 providers"/>
</dbReference>
<dbReference type="DNASU" id="74414"/>
<dbReference type="Ensembl" id="ENSMUST00000029741.9">
    <molecule id="Q9D483-1"/>
    <property type="protein sequence ID" value="ENSMUSP00000029741.3"/>
    <property type="gene ID" value="ENSMUSG00000028099.9"/>
</dbReference>
<dbReference type="Ensembl" id="ENSMUST00000141377.8">
    <molecule id="Q9D483-2"/>
    <property type="protein sequence ID" value="ENSMUSP00000115300.2"/>
    <property type="gene ID" value="ENSMUSG00000028099.9"/>
</dbReference>
<dbReference type="Ensembl" id="ENSMUST00000154679.8">
    <molecule id="Q9D483-1"/>
    <property type="protein sequence ID" value="ENSMUSP00000122435.2"/>
    <property type="gene ID" value="ENSMUSG00000028099.9"/>
</dbReference>
<dbReference type="GeneID" id="74414"/>
<dbReference type="KEGG" id="mmu:74414"/>
<dbReference type="UCSC" id="uc008qoa.2">
    <molecule id="Q9D483-1"/>
    <property type="organism name" value="mouse"/>
</dbReference>
<dbReference type="UCSC" id="uc008qoc.2">
    <molecule id="Q9D483-2"/>
    <property type="organism name" value="mouse"/>
</dbReference>
<dbReference type="AGR" id="MGI:1921664"/>
<dbReference type="CTD" id="10623"/>
<dbReference type="MGI" id="MGI:1921664">
    <property type="gene designation" value="Polr3c"/>
</dbReference>
<dbReference type="VEuPathDB" id="HostDB:ENSMUSG00000028099"/>
<dbReference type="eggNOG" id="KOG2587">
    <property type="taxonomic scope" value="Eukaryota"/>
</dbReference>
<dbReference type="GeneTree" id="ENSGT00390000002799"/>
<dbReference type="HOGENOM" id="CLU_023294_1_1_1"/>
<dbReference type="InParanoid" id="Q9D483"/>
<dbReference type="OMA" id="GQYVVHM"/>
<dbReference type="OrthoDB" id="272392at2759"/>
<dbReference type="PhylomeDB" id="Q9D483"/>
<dbReference type="TreeFam" id="TF103048"/>
<dbReference type="Reactome" id="R-MMU-76061">
    <property type="pathway name" value="RNA Polymerase III Transcription Initiation From Type 1 Promoter"/>
</dbReference>
<dbReference type="Reactome" id="R-MMU-76066">
    <property type="pathway name" value="RNA Polymerase III Transcription Initiation From Type 2 Promoter"/>
</dbReference>
<dbReference type="Reactome" id="R-MMU-76071">
    <property type="pathway name" value="RNA Polymerase III Transcription Initiation From Type 3 Promoter"/>
</dbReference>
<dbReference type="BioGRID-ORCS" id="74414">
    <property type="hits" value="24 hits in 83 CRISPR screens"/>
</dbReference>
<dbReference type="PRO" id="PR:Q9D483"/>
<dbReference type="Proteomes" id="UP000000589">
    <property type="component" value="Chromosome 3"/>
</dbReference>
<dbReference type="RNAct" id="Q9D483">
    <property type="molecule type" value="protein"/>
</dbReference>
<dbReference type="Bgee" id="ENSMUSG00000028099">
    <property type="expression patterns" value="Expressed in placenta labyrinth and 254 other cell types or tissues"/>
</dbReference>
<dbReference type="ExpressionAtlas" id="Q9D483">
    <property type="expression patterns" value="baseline and differential"/>
</dbReference>
<dbReference type="GO" id="GO:0005654">
    <property type="term" value="C:nucleoplasm"/>
    <property type="evidence" value="ECO:0007669"/>
    <property type="project" value="Ensembl"/>
</dbReference>
<dbReference type="GO" id="GO:0005666">
    <property type="term" value="C:RNA polymerase III complex"/>
    <property type="evidence" value="ECO:0000266"/>
    <property type="project" value="MGI"/>
</dbReference>
<dbReference type="GO" id="GO:0016779">
    <property type="term" value="F:nucleotidyltransferase activity"/>
    <property type="evidence" value="ECO:0007669"/>
    <property type="project" value="UniProtKB-KW"/>
</dbReference>
<dbReference type="GO" id="GO:0003697">
    <property type="term" value="F:single-stranded DNA binding"/>
    <property type="evidence" value="ECO:0000250"/>
    <property type="project" value="UniProtKB"/>
</dbReference>
<dbReference type="GO" id="GO:0051607">
    <property type="term" value="P:defense response to virus"/>
    <property type="evidence" value="ECO:0007669"/>
    <property type="project" value="UniProtKB-KW"/>
</dbReference>
<dbReference type="GO" id="GO:0006351">
    <property type="term" value="P:DNA-templated transcription"/>
    <property type="evidence" value="ECO:0007669"/>
    <property type="project" value="InterPro"/>
</dbReference>
<dbReference type="GO" id="GO:0045087">
    <property type="term" value="P:innate immune response"/>
    <property type="evidence" value="ECO:0007669"/>
    <property type="project" value="UniProtKB-KW"/>
</dbReference>
<dbReference type="GO" id="GO:0045089">
    <property type="term" value="P:positive regulation of innate immune response"/>
    <property type="evidence" value="ECO:0000250"/>
    <property type="project" value="UniProtKB"/>
</dbReference>
<dbReference type="GO" id="GO:0032728">
    <property type="term" value="P:positive regulation of interferon-beta production"/>
    <property type="evidence" value="ECO:0000250"/>
    <property type="project" value="UniProtKB"/>
</dbReference>
<dbReference type="FunFam" id="1.10.10.10:FF:000199">
    <property type="entry name" value="DNA-directed RNA polymerase III subunit RPC3"/>
    <property type="match status" value="1"/>
</dbReference>
<dbReference type="FunFam" id="1.10.10.10:FF:000218">
    <property type="entry name" value="DNA-directed RNA polymerase III subunit RPC3"/>
    <property type="match status" value="1"/>
</dbReference>
<dbReference type="FunFam" id="1.10.10.10:FF:000256">
    <property type="entry name" value="DNA-directed RNA polymerase III subunit RPC3"/>
    <property type="match status" value="1"/>
</dbReference>
<dbReference type="FunFam" id="1.10.10.10:FF:000262">
    <property type="entry name" value="DNA-directed RNA polymerase III subunit RPC3"/>
    <property type="match status" value="1"/>
</dbReference>
<dbReference type="Gene3D" id="6.10.140.1450">
    <property type="match status" value="1"/>
</dbReference>
<dbReference type="Gene3D" id="1.10.10.10">
    <property type="entry name" value="Winged helix-like DNA-binding domain superfamily/Winged helix DNA-binding domain"/>
    <property type="match status" value="4"/>
</dbReference>
<dbReference type="InterPro" id="IPR055207">
    <property type="entry name" value="POLR3C_WHD"/>
</dbReference>
<dbReference type="InterPro" id="IPR013197">
    <property type="entry name" value="RNA_pol_III_RPC82-rel_HTH"/>
</dbReference>
<dbReference type="InterPro" id="IPR008806">
    <property type="entry name" value="RNA_pol_III_Rpc82_C"/>
</dbReference>
<dbReference type="InterPro" id="IPR039748">
    <property type="entry name" value="RPC3"/>
</dbReference>
<dbReference type="InterPro" id="IPR036388">
    <property type="entry name" value="WH-like_DNA-bd_sf"/>
</dbReference>
<dbReference type="PANTHER" id="PTHR12949:SF0">
    <property type="entry name" value="DNA-DIRECTED RNA POLYMERASE III SUBUNIT RPC3"/>
    <property type="match status" value="1"/>
</dbReference>
<dbReference type="PANTHER" id="PTHR12949">
    <property type="entry name" value="RNA POLYMERASE III DNA DIRECTED -RELATED"/>
    <property type="match status" value="1"/>
</dbReference>
<dbReference type="Pfam" id="PF08221">
    <property type="entry name" value="HTH_9"/>
    <property type="match status" value="1"/>
</dbReference>
<dbReference type="Pfam" id="PF22536">
    <property type="entry name" value="POLR3C_WHD"/>
    <property type="match status" value="1"/>
</dbReference>
<dbReference type="Pfam" id="PF05645">
    <property type="entry name" value="RNA_pol_Rpc82"/>
    <property type="match status" value="1"/>
</dbReference>
<dbReference type="Pfam" id="PF20912">
    <property type="entry name" value="RPC3_helical"/>
    <property type="match status" value="1"/>
</dbReference>
<proteinExistence type="evidence at protein level"/>
<organism>
    <name type="scientific">Mus musculus</name>
    <name type="common">Mouse</name>
    <dbReference type="NCBI Taxonomy" id="10090"/>
    <lineage>
        <taxon>Eukaryota</taxon>
        <taxon>Metazoa</taxon>
        <taxon>Chordata</taxon>
        <taxon>Craniata</taxon>
        <taxon>Vertebrata</taxon>
        <taxon>Euteleostomi</taxon>
        <taxon>Mammalia</taxon>
        <taxon>Eutheria</taxon>
        <taxon>Euarchontoglires</taxon>
        <taxon>Glires</taxon>
        <taxon>Rodentia</taxon>
        <taxon>Myomorpha</taxon>
        <taxon>Muroidea</taxon>
        <taxon>Muridae</taxon>
        <taxon>Murinae</taxon>
        <taxon>Mus</taxon>
        <taxon>Mus</taxon>
    </lineage>
</organism>
<gene>
    <name evidence="6" type="primary">Polr3c</name>
</gene>
<feature type="chain" id="PRO_0000073964" description="DNA-directed RNA polymerase III subunit RPC3">
    <location>
        <begin position="1"/>
        <end position="533"/>
    </location>
</feature>
<feature type="region of interest" description="Disordered" evidence="3">
    <location>
        <begin position="162"/>
        <end position="181"/>
    </location>
</feature>
<feature type="region of interest" description="Disordered" evidence="3">
    <location>
        <begin position="197"/>
        <end position="228"/>
    </location>
</feature>
<feature type="compositionally biased region" description="Basic and acidic residues" evidence="3">
    <location>
        <begin position="211"/>
        <end position="227"/>
    </location>
</feature>
<feature type="modified residue" description="Phosphoserine" evidence="2">
    <location>
        <position position="194"/>
    </location>
</feature>
<feature type="splice variant" id="VSP_010678" description="In isoform 2." evidence="4">
    <original>GKRR</original>
    <variation>DFTS</variation>
    <location>
        <begin position="199"/>
        <end position="202"/>
    </location>
</feature>
<feature type="splice variant" id="VSP_010679" description="In isoform 2." evidence="4">
    <location>
        <begin position="203"/>
        <end position="533"/>
    </location>
</feature>
<feature type="sequence conflict" description="In Ref. 2; AAH26793." evidence="5" ref="2">
    <original>R</original>
    <variation>P</variation>
    <location>
        <position position="171"/>
    </location>
</feature>
<accession>Q9D483</accession>
<accession>Q8R0I2</accession>
<protein>
    <recommendedName>
        <fullName>DNA-directed RNA polymerase III subunit RPC3</fullName>
        <shortName>RNA polymerase III subunit C3</shortName>
    </recommendedName>
    <alternativeName>
        <fullName>DNA-directed RNA polymerase III subunit C</fullName>
    </alternativeName>
</protein>